<reference key="1">
    <citation type="journal article" date="2002" name="Proc. Natl. Acad. Sci. U.S.A.">
        <title>Genome sequence of the hyperthermophilic crenarchaeon Pyrobaculum aerophilum.</title>
        <authorList>
            <person name="Fitz-Gibbon S.T."/>
            <person name="Ladner H."/>
            <person name="Kim U.-J."/>
            <person name="Stetter K.O."/>
            <person name="Simon M.I."/>
            <person name="Miller J.H."/>
        </authorList>
    </citation>
    <scope>NUCLEOTIDE SEQUENCE [LARGE SCALE GENOMIC DNA]</scope>
    <source>
        <strain>ATCC 51768 / DSM 7523 / JCM 9630 / CIP 104966 / NBRC 100827 / IM2</strain>
    </source>
</reference>
<organism>
    <name type="scientific">Pyrobaculum aerophilum (strain ATCC 51768 / DSM 7523 / JCM 9630 / CIP 104966 / NBRC 100827 / IM2)</name>
    <dbReference type="NCBI Taxonomy" id="178306"/>
    <lineage>
        <taxon>Archaea</taxon>
        <taxon>Thermoproteota</taxon>
        <taxon>Thermoprotei</taxon>
        <taxon>Thermoproteales</taxon>
        <taxon>Thermoproteaceae</taxon>
        <taxon>Pyrobaculum</taxon>
    </lineage>
</organism>
<name>LYSY_PYRAE</name>
<evidence type="ECO:0000255" key="1">
    <source>
        <dbReference type="HAMAP-Rule" id="MF_02083"/>
    </source>
</evidence>
<protein>
    <recommendedName>
        <fullName evidence="1">Putative [LysW]-L-2-aminoadipate/[LysW]-L-glutamate phosphate reductase</fullName>
        <ecNumber evidence="1">1.2.1.103</ecNumber>
        <ecNumber evidence="1">1.2.1.106</ecNumber>
    </recommendedName>
</protein>
<keyword id="KW-0028">Amino-acid biosynthesis</keyword>
<keyword id="KW-0055">Arginine biosynthesis</keyword>
<keyword id="KW-0963">Cytoplasm</keyword>
<keyword id="KW-0457">Lysine biosynthesis</keyword>
<keyword id="KW-0521">NADP</keyword>
<keyword id="KW-0560">Oxidoreductase</keyword>
<keyword id="KW-1185">Reference proteome</keyword>
<comment type="function">
    <text evidence="1">Involved in both the arginine and lysine biosynthetic pathways.</text>
</comment>
<comment type="catalytic activity">
    <reaction evidence="1">
        <text>[amino-group carrier protein]-C-terminal-N-(1-carboxy-5-oxopentan-1-yl)-L-glutamine + phosphate + NADP(+) = [amino-group carrier protein]-C-terminal-N-(1-carboxy-5-phosphooxy-5-oxopentan-1-yl)-L-glutamine + NADPH + H(+)</text>
        <dbReference type="Rhea" id="RHEA:41948"/>
        <dbReference type="Rhea" id="RHEA-COMP:9712"/>
        <dbReference type="Rhea" id="RHEA-COMP:9714"/>
        <dbReference type="ChEBI" id="CHEBI:15378"/>
        <dbReference type="ChEBI" id="CHEBI:43474"/>
        <dbReference type="ChEBI" id="CHEBI:57783"/>
        <dbReference type="ChEBI" id="CHEBI:58349"/>
        <dbReference type="ChEBI" id="CHEBI:78499"/>
        <dbReference type="ChEBI" id="CHEBI:78501"/>
        <dbReference type="EC" id="1.2.1.103"/>
    </reaction>
</comment>
<comment type="catalytic activity">
    <reaction evidence="1">
        <text>[amino-group carrier protein]-C-terminal-gamma-(L-glutamyl-5-semialdehyde)-L-glutamate + phosphate + NADP(+) = [amino-group carrier protein]-C-terminal-gamma-(5-phospho-L-glutamyl)-L-glutamate + NADPH + H(+)</text>
        <dbReference type="Rhea" id="RHEA:52668"/>
        <dbReference type="Rhea" id="RHEA-COMP:13313"/>
        <dbReference type="Rhea" id="RHEA-COMP:13327"/>
        <dbReference type="ChEBI" id="CHEBI:15378"/>
        <dbReference type="ChEBI" id="CHEBI:43474"/>
        <dbReference type="ChEBI" id="CHEBI:57783"/>
        <dbReference type="ChEBI" id="CHEBI:58349"/>
        <dbReference type="ChEBI" id="CHEBI:136717"/>
        <dbReference type="ChEBI" id="CHEBI:136761"/>
        <dbReference type="EC" id="1.2.1.106"/>
    </reaction>
</comment>
<comment type="pathway">
    <text evidence="1">Amino-acid biosynthesis; L-lysine biosynthesis via AAA pathway; L-lysine from L-alpha-aminoadipate (Thermus route): step 3/5.</text>
</comment>
<comment type="pathway">
    <text evidence="1">Amino-acid biosynthesis; L-arginine biosynthesis.</text>
</comment>
<comment type="subcellular location">
    <subcellularLocation>
        <location evidence="1">Cytoplasm</location>
    </subcellularLocation>
</comment>
<comment type="similarity">
    <text evidence="1">Belongs to the NAGSA dehydrogenase family. Type 1 subfamily. LysY sub-subfamily.</text>
</comment>
<feature type="chain" id="PRO_0000112493" description="Putative [LysW]-L-2-aminoadipate/[LysW]-L-glutamate phosphate reductase">
    <location>
        <begin position="1"/>
        <end position="351"/>
    </location>
</feature>
<feature type="active site" evidence="1">
    <location>
        <position position="150"/>
    </location>
</feature>
<feature type="binding site" evidence="1">
    <location>
        <begin position="9"/>
        <end position="12"/>
    </location>
    <ligand>
        <name>NADP(+)</name>
        <dbReference type="ChEBI" id="CHEBI:58349"/>
    </ligand>
</feature>
<feature type="binding site" evidence="1">
    <location>
        <begin position="33"/>
        <end position="35"/>
    </location>
    <ligand>
        <name>NADP(+)</name>
        <dbReference type="ChEBI" id="CHEBI:58349"/>
    </ligand>
</feature>
<feature type="binding site" evidence="1">
    <location>
        <position position="318"/>
    </location>
    <ligand>
        <name>NADP(+)</name>
        <dbReference type="ChEBI" id="CHEBI:58349"/>
    </ligand>
</feature>
<dbReference type="EC" id="1.2.1.103" evidence="1"/>
<dbReference type="EC" id="1.2.1.106" evidence="1"/>
<dbReference type="EMBL" id="AE009441">
    <property type="protein sequence ID" value="AAL64508.1"/>
    <property type="molecule type" value="Genomic_DNA"/>
</dbReference>
<dbReference type="RefSeq" id="WP_011008976.1">
    <property type="nucleotide sequence ID" value="NC_003364.1"/>
</dbReference>
<dbReference type="SMR" id="Q8ZUA0"/>
<dbReference type="FunCoup" id="Q8ZUA0">
    <property type="interactions" value="78"/>
</dbReference>
<dbReference type="STRING" id="178306.PAE2881"/>
<dbReference type="EnsemblBacteria" id="AAL64508">
    <property type="protein sequence ID" value="AAL64508"/>
    <property type="gene ID" value="PAE2881"/>
</dbReference>
<dbReference type="GeneID" id="1463670"/>
<dbReference type="KEGG" id="pai:PAE2881"/>
<dbReference type="PATRIC" id="fig|178306.9.peg.2153"/>
<dbReference type="eggNOG" id="arCOG00495">
    <property type="taxonomic scope" value="Archaea"/>
</dbReference>
<dbReference type="HOGENOM" id="CLU_006384_0_1_2"/>
<dbReference type="InParanoid" id="Q8ZUA0"/>
<dbReference type="UniPathway" id="UPA00033">
    <property type="reaction ID" value="UER00037"/>
</dbReference>
<dbReference type="UniPathway" id="UPA00068"/>
<dbReference type="Proteomes" id="UP000002439">
    <property type="component" value="Chromosome"/>
</dbReference>
<dbReference type="GO" id="GO:0005737">
    <property type="term" value="C:cytoplasm"/>
    <property type="evidence" value="ECO:0007669"/>
    <property type="project" value="UniProtKB-SubCell"/>
</dbReference>
<dbReference type="GO" id="GO:0043870">
    <property type="term" value="F:N-acetyl-gamma-aminoadipyl-phosphate reductase activity"/>
    <property type="evidence" value="ECO:0007669"/>
    <property type="project" value="RHEA"/>
</dbReference>
<dbReference type="GO" id="GO:0003942">
    <property type="term" value="F:N-acetyl-gamma-glutamyl-phosphate reductase activity"/>
    <property type="evidence" value="ECO:0007669"/>
    <property type="project" value="InterPro"/>
</dbReference>
<dbReference type="GO" id="GO:0051287">
    <property type="term" value="F:NAD binding"/>
    <property type="evidence" value="ECO:0007669"/>
    <property type="project" value="InterPro"/>
</dbReference>
<dbReference type="GO" id="GO:0070401">
    <property type="term" value="F:NADP+ binding"/>
    <property type="evidence" value="ECO:0007669"/>
    <property type="project" value="InterPro"/>
</dbReference>
<dbReference type="GO" id="GO:0042450">
    <property type="term" value="P:arginine biosynthetic process via ornithine"/>
    <property type="evidence" value="ECO:0007669"/>
    <property type="project" value="UniProtKB-UniRule"/>
</dbReference>
<dbReference type="GO" id="GO:0006526">
    <property type="term" value="P:L-arginine biosynthetic process"/>
    <property type="evidence" value="ECO:0007669"/>
    <property type="project" value="UniProtKB-UniPathway"/>
</dbReference>
<dbReference type="GO" id="GO:0019878">
    <property type="term" value="P:lysine biosynthetic process via aminoadipic acid"/>
    <property type="evidence" value="ECO:0007669"/>
    <property type="project" value="UniProtKB-UniRule"/>
</dbReference>
<dbReference type="CDD" id="cd23939">
    <property type="entry name" value="AGPR_1_C_LysY"/>
    <property type="match status" value="1"/>
</dbReference>
<dbReference type="CDD" id="cd17895">
    <property type="entry name" value="AGPR_1_N"/>
    <property type="match status" value="1"/>
</dbReference>
<dbReference type="Gene3D" id="3.30.360.10">
    <property type="entry name" value="Dihydrodipicolinate Reductase, domain 2"/>
    <property type="match status" value="1"/>
</dbReference>
<dbReference type="Gene3D" id="3.40.50.720">
    <property type="entry name" value="NAD(P)-binding Rossmann-like Domain"/>
    <property type="match status" value="1"/>
</dbReference>
<dbReference type="HAMAP" id="MF_00150">
    <property type="entry name" value="ArgC_type1"/>
    <property type="match status" value="1"/>
</dbReference>
<dbReference type="HAMAP" id="MF_02083">
    <property type="entry name" value="LysY"/>
    <property type="match status" value="1"/>
</dbReference>
<dbReference type="InterPro" id="IPR000706">
    <property type="entry name" value="AGPR_type-1"/>
</dbReference>
<dbReference type="InterPro" id="IPR037535">
    <property type="entry name" value="LysY"/>
</dbReference>
<dbReference type="InterPro" id="IPR036291">
    <property type="entry name" value="NAD(P)-bd_dom_sf"/>
</dbReference>
<dbReference type="InterPro" id="IPR050085">
    <property type="entry name" value="NAGSA_dehydrogenase"/>
</dbReference>
<dbReference type="InterPro" id="IPR000534">
    <property type="entry name" value="Semialdehyde_DH_NAD-bd"/>
</dbReference>
<dbReference type="NCBIfam" id="TIGR01850">
    <property type="entry name" value="argC"/>
    <property type="match status" value="1"/>
</dbReference>
<dbReference type="PANTHER" id="PTHR32338:SF11">
    <property type="entry name" value="[LYSW]-L-2-AMINOADIPATE_[LYSW]-L-GLUTAMATE PHOSPHATE REDUCTASE-RELATED"/>
    <property type="match status" value="1"/>
</dbReference>
<dbReference type="PANTHER" id="PTHR32338">
    <property type="entry name" value="N-ACETYL-GAMMA-GLUTAMYL-PHOSPHATE REDUCTASE, CHLOROPLASTIC-RELATED-RELATED"/>
    <property type="match status" value="1"/>
</dbReference>
<dbReference type="Pfam" id="PF01118">
    <property type="entry name" value="Semialdhyde_dh"/>
    <property type="match status" value="1"/>
</dbReference>
<dbReference type="Pfam" id="PF22698">
    <property type="entry name" value="Semialdhyde_dhC_1"/>
    <property type="match status" value="1"/>
</dbReference>
<dbReference type="SMART" id="SM00859">
    <property type="entry name" value="Semialdhyde_dh"/>
    <property type="match status" value="1"/>
</dbReference>
<dbReference type="SUPFAM" id="SSF55347">
    <property type="entry name" value="Glyceraldehyde-3-phosphate dehydrogenase-like, C-terminal domain"/>
    <property type="match status" value="1"/>
</dbReference>
<dbReference type="SUPFAM" id="SSF51735">
    <property type="entry name" value="NAD(P)-binding Rossmann-fold domains"/>
    <property type="match status" value="1"/>
</dbReference>
<accession>Q8ZUA0</accession>
<gene>
    <name evidence="1" type="primary">lysY</name>
    <name type="ordered locus">PAE2881</name>
</gene>
<proteinExistence type="inferred from homology"/>
<sequence length="351" mass="38873">MKVCIIGASGFVGGELLRILLQHSGVEVVCATSRRFKGEYVYRVHPNLRGFTQLKFVEPSIDAALKADVVFLALPHGESVKWVPKLYESGVAVFDLSADFRLKDPNAYVEWYKWPQPHPYPDLLQKAVYGQPELHRSELVGAKLVAVPGCMATASILMLAPLAKHGLLGETPPVIDAKIGSSGAGAEGSVVDLHSFRTYVVRPYEPVHHRHIAEIEQELSLLAGKRVKVAFTPHAVDMVRGIFATGHVFVEKMPTEADMWKMYRSMYGDSKFIRIVKDRLGISRYPNVKYVLGSNFVDIGFELDQRLNRLVTFSAIDNLVRGAAGQAVQAFNVAMGFPEDEGLRYIPLAPV</sequence>